<name>MOCO2_CULQU</name>
<organism>
    <name type="scientific">Culex quinquefasciatus</name>
    <name type="common">Southern house mosquito</name>
    <name type="synonym">Culex pungens</name>
    <dbReference type="NCBI Taxonomy" id="7176"/>
    <lineage>
        <taxon>Eukaryota</taxon>
        <taxon>Metazoa</taxon>
        <taxon>Ecdysozoa</taxon>
        <taxon>Arthropoda</taxon>
        <taxon>Hexapoda</taxon>
        <taxon>Insecta</taxon>
        <taxon>Pterygota</taxon>
        <taxon>Neoptera</taxon>
        <taxon>Endopterygota</taxon>
        <taxon>Diptera</taxon>
        <taxon>Nematocera</taxon>
        <taxon>Culicoidea</taxon>
        <taxon>Culicidae</taxon>
        <taxon>Culicinae</taxon>
        <taxon>Culicini</taxon>
        <taxon>Culex</taxon>
        <taxon>Culex</taxon>
    </lineage>
</organism>
<protein>
    <recommendedName>
        <fullName evidence="1">Molybdenum cofactor sulfurase 2</fullName>
        <shortName evidence="1">MCS 2</shortName>
        <shortName evidence="1">MOS 2</shortName>
        <shortName evidence="1">MoCo sulfurase 2</shortName>
        <ecNumber evidence="1">2.8.1.9</ecNumber>
    </recommendedName>
    <alternativeName>
        <fullName evidence="1">Molybdenum cofactor sulfurtransferase 2</fullName>
    </alternativeName>
    <alternativeName>
        <fullName evidence="1">Protein maroon-like 2</fullName>
        <shortName evidence="1">Ma-l 2</shortName>
    </alternativeName>
</protein>
<feature type="chain" id="PRO_0000369369" description="Molybdenum cofactor sulfurase 2">
    <location>
        <begin position="1"/>
        <end position="760"/>
    </location>
</feature>
<feature type="domain" description="MOSC" evidence="1">
    <location>
        <begin position="608"/>
        <end position="758"/>
    </location>
</feature>
<feature type="active site" evidence="1">
    <location>
        <position position="389"/>
    </location>
</feature>
<feature type="modified residue" description="N6-(pyridoxal phosphate)lysine" evidence="1">
    <location>
        <position position="223"/>
    </location>
</feature>
<keyword id="KW-0501">Molybdenum cofactor biosynthesis</keyword>
<keyword id="KW-0663">Pyridoxal phosphate</keyword>
<keyword id="KW-1185">Reference proteome</keyword>
<keyword id="KW-0808">Transferase</keyword>
<evidence type="ECO:0000255" key="1">
    <source>
        <dbReference type="HAMAP-Rule" id="MF_03050"/>
    </source>
</evidence>
<dbReference type="EC" id="2.8.1.9" evidence="1"/>
<dbReference type="EMBL" id="DS232077">
    <property type="protein sequence ID" value="EDS34099.1"/>
    <property type="molecule type" value="Genomic_DNA"/>
</dbReference>
<dbReference type="RefSeq" id="XP_001870738.1">
    <property type="nucleotide sequence ID" value="XM_001870703.1"/>
</dbReference>
<dbReference type="SMR" id="B0WSX1"/>
<dbReference type="FunCoup" id="B0WSX1">
    <property type="interactions" value="145"/>
</dbReference>
<dbReference type="STRING" id="7176.B0WSX1"/>
<dbReference type="EnsemblMetazoa" id="CPIJ009941-RA">
    <property type="protein sequence ID" value="CPIJ009941-PA"/>
    <property type="gene ID" value="CPIJ009941"/>
</dbReference>
<dbReference type="GeneID" id="6042721"/>
<dbReference type="KEGG" id="cqu:CpipJ_CPIJ009941"/>
<dbReference type="CTD" id="4118"/>
<dbReference type="VEuPathDB" id="VectorBase:CPIJ009941"/>
<dbReference type="VEuPathDB" id="VectorBase:CQUJHB011474"/>
<dbReference type="eggNOG" id="KOG2142">
    <property type="taxonomic scope" value="Eukaryota"/>
</dbReference>
<dbReference type="HOGENOM" id="CLU_010913_0_1_1"/>
<dbReference type="InParanoid" id="B0WSX1"/>
<dbReference type="OMA" id="PCTRCQM"/>
<dbReference type="OrthoDB" id="420046at2759"/>
<dbReference type="PhylomeDB" id="B0WSX1"/>
<dbReference type="Proteomes" id="UP000002320">
    <property type="component" value="Unassembled WGS sequence"/>
</dbReference>
<dbReference type="GO" id="GO:0016829">
    <property type="term" value="F:lyase activity"/>
    <property type="evidence" value="ECO:0007669"/>
    <property type="project" value="UniProtKB-UniRule"/>
</dbReference>
<dbReference type="GO" id="GO:0008265">
    <property type="term" value="F:molybdenum cofactor sulfurtransferase activity"/>
    <property type="evidence" value="ECO:0000250"/>
    <property type="project" value="UniProtKB"/>
</dbReference>
<dbReference type="GO" id="GO:0030151">
    <property type="term" value="F:molybdenum ion binding"/>
    <property type="evidence" value="ECO:0007669"/>
    <property type="project" value="UniProtKB-UniRule"/>
</dbReference>
<dbReference type="GO" id="GO:0030170">
    <property type="term" value="F:pyridoxal phosphate binding"/>
    <property type="evidence" value="ECO:0007669"/>
    <property type="project" value="UniProtKB-UniRule"/>
</dbReference>
<dbReference type="GO" id="GO:0006777">
    <property type="term" value="P:Mo-molybdopterin cofactor biosynthetic process"/>
    <property type="evidence" value="ECO:0007669"/>
    <property type="project" value="UniProtKB-UniRule"/>
</dbReference>
<dbReference type="GO" id="GO:0043545">
    <property type="term" value="P:molybdopterin cofactor metabolic process"/>
    <property type="evidence" value="ECO:0000250"/>
    <property type="project" value="UniProtKB"/>
</dbReference>
<dbReference type="FunFam" id="3.40.640.10:FF:000119">
    <property type="entry name" value="Molybdenum cofactor sulfurase"/>
    <property type="match status" value="1"/>
</dbReference>
<dbReference type="FunFam" id="3.90.1150.10:FF:000079">
    <property type="entry name" value="Molybdenum cofactor sulfurase"/>
    <property type="match status" value="1"/>
</dbReference>
<dbReference type="Gene3D" id="3.90.1150.10">
    <property type="entry name" value="Aspartate Aminotransferase, domain 1"/>
    <property type="match status" value="1"/>
</dbReference>
<dbReference type="Gene3D" id="3.40.640.10">
    <property type="entry name" value="Type I PLP-dependent aspartate aminotransferase-like (Major domain)"/>
    <property type="match status" value="1"/>
</dbReference>
<dbReference type="HAMAP" id="MF_03050">
    <property type="entry name" value="MOCOS"/>
    <property type="match status" value="1"/>
</dbReference>
<dbReference type="InterPro" id="IPR000192">
    <property type="entry name" value="Aminotrans_V_dom"/>
</dbReference>
<dbReference type="InterPro" id="IPR020845">
    <property type="entry name" value="AMP-binding_CS"/>
</dbReference>
<dbReference type="InterPro" id="IPR005302">
    <property type="entry name" value="MoCF_Sase_C"/>
</dbReference>
<dbReference type="InterPro" id="IPR028886">
    <property type="entry name" value="MoCo_sulfurase"/>
</dbReference>
<dbReference type="InterPro" id="IPR005303">
    <property type="entry name" value="MOCOS_middle"/>
</dbReference>
<dbReference type="InterPro" id="IPR015424">
    <property type="entry name" value="PyrdxlP-dep_Trfase"/>
</dbReference>
<dbReference type="InterPro" id="IPR015421">
    <property type="entry name" value="PyrdxlP-dep_Trfase_major"/>
</dbReference>
<dbReference type="InterPro" id="IPR015422">
    <property type="entry name" value="PyrdxlP-dep_Trfase_small"/>
</dbReference>
<dbReference type="InterPro" id="IPR011037">
    <property type="entry name" value="Pyrv_Knase-like_insert_dom_sf"/>
</dbReference>
<dbReference type="PANTHER" id="PTHR14237:SF19">
    <property type="entry name" value="MITOCHONDRIAL AMIDOXIME REDUCING COMPONENT 1"/>
    <property type="match status" value="1"/>
</dbReference>
<dbReference type="PANTHER" id="PTHR14237">
    <property type="entry name" value="MOLYBDOPTERIN COFACTOR SULFURASE MOSC"/>
    <property type="match status" value="1"/>
</dbReference>
<dbReference type="Pfam" id="PF00266">
    <property type="entry name" value="Aminotran_5"/>
    <property type="match status" value="1"/>
</dbReference>
<dbReference type="Pfam" id="PF03473">
    <property type="entry name" value="MOSC"/>
    <property type="match status" value="1"/>
</dbReference>
<dbReference type="Pfam" id="PF03476">
    <property type="entry name" value="MOSC_N"/>
    <property type="match status" value="1"/>
</dbReference>
<dbReference type="SUPFAM" id="SSF141673">
    <property type="entry name" value="MOSC N-terminal domain-like"/>
    <property type="match status" value="1"/>
</dbReference>
<dbReference type="SUPFAM" id="SSF50800">
    <property type="entry name" value="PK beta-barrel domain-like"/>
    <property type="match status" value="1"/>
</dbReference>
<dbReference type="SUPFAM" id="SSF53383">
    <property type="entry name" value="PLP-dependent transferases"/>
    <property type="match status" value="1"/>
</dbReference>
<dbReference type="PROSITE" id="PS51340">
    <property type="entry name" value="MOSC"/>
    <property type="match status" value="1"/>
</dbReference>
<gene>
    <name evidence="1" type="primary">mal2</name>
    <name type="ORF">CPIJ009941</name>
</gene>
<sequence length="760" mass="84400">MAMEQFESVFTAKENAEIAKEFTRLKDTCYLDHAGTTLYADSQIRAVGDCLTGSLFCNPHTSRTTEDLLDQVRFRVLRHFGTHPSEYGLVFTSGTTGALKLVAECFDFGDEGAFVYTRDNHTSVLGMRAVVGTERIVPIGREDLRGGRSTGGGKSSLVVFPAQCNFNGFKYPLGLVEDIQRNGLVGFDGDRFHVCLDAASFVSTNALDLAKHQPSFVCLSFYKIFGFPTGLGALLVHRSAQNLLKKRYYGGGTVKIAMAGRNFHVKRDSLADQFEDGTVPFTSIISLLQGFETLERLVPASGELSSIDRVSRHTFALGRYCFQRLRGLRHANSNSVVKLYHDTEFEDRGSQGGIVNFNVLHEDGSFVGFAEVAYMASVHNVVLRTGCFCNPGACQRLLELTDEDVLKQFNAGHVCGDANDLIGGQPTGSVRVSFGYMSRREDVDRLVEMVEKCYVKKMTANGLTRKQIVSNYKNYDQPKLKMICLFPIKSCGAYKITTSWPLCHKGLKHDREFVIVDENGVAMTQKKLVEMCLIKPKIDIKTNTLILTHPAMENFTLSMEPLSNESQSIKLCQTKVCQDNVQAIDCGDAVANWISIALQTSGLRLLKQSDDEARTLRKSTTEIALSNQAQFLLINQASVRWLADLVPDWDDLSQEPTLESLVDRFRGNLIIDSVKPLEESSWTQLRIGPLEFSVDGPCSRCQMICIDQSSGTRTAEPLRTIAREFKGKMRFGIYLSHVKSLEGSDEKLLHCGSPLQVVAE</sequence>
<accession>B0WSX1</accession>
<comment type="function">
    <text evidence="1">Sulfurates the molybdenum cofactor. Sulfation of molybdenum is essential for xanthine dehydrogenase (XDH) and aldehyde oxidase (ADO) enzymes in which molybdenum cofactor is liganded by 1 oxygen and 1 sulfur atom in active form.</text>
</comment>
<comment type="catalytic activity">
    <reaction evidence="1">
        <text>Mo-molybdopterin + L-cysteine + AH2 = thio-Mo-molybdopterin + L-alanine + A + H2O</text>
        <dbReference type="Rhea" id="RHEA:42636"/>
        <dbReference type="ChEBI" id="CHEBI:13193"/>
        <dbReference type="ChEBI" id="CHEBI:15377"/>
        <dbReference type="ChEBI" id="CHEBI:17499"/>
        <dbReference type="ChEBI" id="CHEBI:35235"/>
        <dbReference type="ChEBI" id="CHEBI:57972"/>
        <dbReference type="ChEBI" id="CHEBI:71302"/>
        <dbReference type="ChEBI" id="CHEBI:82685"/>
        <dbReference type="EC" id="2.8.1.9"/>
    </reaction>
</comment>
<comment type="cofactor">
    <cofactor evidence="1">
        <name>pyridoxal 5'-phosphate</name>
        <dbReference type="ChEBI" id="CHEBI:597326"/>
    </cofactor>
</comment>
<comment type="similarity">
    <text evidence="1">Belongs to the class-V pyridoxal-phosphate-dependent aminotransferase family. MOCOS subfamily.</text>
</comment>
<reference key="1">
    <citation type="submission" date="2007-03" db="EMBL/GenBank/DDBJ databases">
        <title>Annotation of Culex pipiens quinquefasciatus.</title>
        <authorList>
            <consortium name="The Broad Institute Genome Sequencing Platform"/>
            <person name="Atkinson P.W."/>
            <person name="Hemingway J."/>
            <person name="Christensen B.M."/>
            <person name="Higgs S."/>
            <person name="Kodira C.D."/>
            <person name="Hannick L.I."/>
            <person name="Megy K."/>
            <person name="O'Leary S.B."/>
            <person name="Pearson M."/>
            <person name="Haas B.J."/>
            <person name="Mauceli E."/>
            <person name="Wortman J.R."/>
            <person name="Lee N.H."/>
            <person name="Guigo R."/>
            <person name="Stanke M."/>
            <person name="Alvarado L."/>
            <person name="Amedeo P."/>
            <person name="Antoine C.H."/>
            <person name="Arensburger P."/>
            <person name="Bidwell S.L."/>
            <person name="Crawford M."/>
            <person name="Camaro F."/>
            <person name="Devon K."/>
            <person name="Engels R."/>
            <person name="Hammond M."/>
            <person name="Howarth C."/>
            <person name="Koehrsen M."/>
            <person name="Lawson D."/>
            <person name="Montgomery P."/>
            <person name="Nene V."/>
            <person name="Nusbaum C."/>
            <person name="Puiu D."/>
            <person name="Romero-Severson J."/>
            <person name="Severson D.W."/>
            <person name="Shumway M."/>
            <person name="Sisk P."/>
            <person name="Stolte C."/>
            <person name="Zeng Q."/>
            <person name="Eisenstadt E."/>
            <person name="Fraser-Liggett C.M."/>
            <person name="Strausberg R."/>
            <person name="Galagan J."/>
            <person name="Birren B."/>
            <person name="Collins F.H."/>
        </authorList>
    </citation>
    <scope>NUCLEOTIDE SEQUENCE [LARGE SCALE GENOMIC DNA]</scope>
    <source>
        <strain>JHB</strain>
    </source>
</reference>
<proteinExistence type="inferred from homology"/>